<evidence type="ECO:0000255" key="1">
    <source>
        <dbReference type="HAMAP-Rule" id="MF_00159"/>
    </source>
</evidence>
<dbReference type="EC" id="1.17.7.3" evidence="1"/>
<dbReference type="EMBL" id="AE013598">
    <property type="protein sequence ID" value="AAW75483.1"/>
    <property type="molecule type" value="Genomic_DNA"/>
</dbReference>
<dbReference type="SMR" id="Q5H0N8"/>
<dbReference type="STRING" id="291331.XOO2229"/>
<dbReference type="KEGG" id="xoo:XOO2229"/>
<dbReference type="PATRIC" id="fig|291331.8.peg.2464"/>
<dbReference type="HOGENOM" id="CLU_042258_1_0_6"/>
<dbReference type="UniPathway" id="UPA00056">
    <property type="reaction ID" value="UER00096"/>
</dbReference>
<dbReference type="Proteomes" id="UP000006735">
    <property type="component" value="Chromosome"/>
</dbReference>
<dbReference type="GO" id="GO:0051539">
    <property type="term" value="F:4 iron, 4 sulfur cluster binding"/>
    <property type="evidence" value="ECO:0007669"/>
    <property type="project" value="UniProtKB-UniRule"/>
</dbReference>
<dbReference type="GO" id="GO:0046429">
    <property type="term" value="F:4-hydroxy-3-methylbut-2-en-1-yl diphosphate synthase activity (ferredoxin)"/>
    <property type="evidence" value="ECO:0007669"/>
    <property type="project" value="UniProtKB-UniRule"/>
</dbReference>
<dbReference type="GO" id="GO:0141197">
    <property type="term" value="F:4-hydroxy-3-methylbut-2-enyl-diphosphate synthase activity (flavodoxin)"/>
    <property type="evidence" value="ECO:0007669"/>
    <property type="project" value="UniProtKB-EC"/>
</dbReference>
<dbReference type="GO" id="GO:0005506">
    <property type="term" value="F:iron ion binding"/>
    <property type="evidence" value="ECO:0007669"/>
    <property type="project" value="InterPro"/>
</dbReference>
<dbReference type="GO" id="GO:0019288">
    <property type="term" value="P:isopentenyl diphosphate biosynthetic process, methylerythritol 4-phosphate pathway"/>
    <property type="evidence" value="ECO:0007669"/>
    <property type="project" value="UniProtKB-UniRule"/>
</dbReference>
<dbReference type="GO" id="GO:0016114">
    <property type="term" value="P:terpenoid biosynthetic process"/>
    <property type="evidence" value="ECO:0007669"/>
    <property type="project" value="InterPro"/>
</dbReference>
<dbReference type="FunFam" id="3.30.413.10:FF:000012">
    <property type="entry name" value="4-hydroxy-3-methylbut-2-en-1-yl diphosphate synthase (flavodoxin)"/>
    <property type="match status" value="1"/>
</dbReference>
<dbReference type="Gene3D" id="3.20.20.20">
    <property type="entry name" value="Dihydropteroate synthase-like"/>
    <property type="match status" value="1"/>
</dbReference>
<dbReference type="Gene3D" id="3.30.413.10">
    <property type="entry name" value="Sulfite Reductase Hemoprotein, domain 1"/>
    <property type="match status" value="1"/>
</dbReference>
<dbReference type="HAMAP" id="MF_00159">
    <property type="entry name" value="IspG"/>
    <property type="match status" value="1"/>
</dbReference>
<dbReference type="InterPro" id="IPR011005">
    <property type="entry name" value="Dihydropteroate_synth-like_sf"/>
</dbReference>
<dbReference type="InterPro" id="IPR016425">
    <property type="entry name" value="IspG_bac"/>
</dbReference>
<dbReference type="InterPro" id="IPR004588">
    <property type="entry name" value="IspG_bac-typ"/>
</dbReference>
<dbReference type="InterPro" id="IPR045854">
    <property type="entry name" value="NO2/SO3_Rdtase_4Fe4S_sf"/>
</dbReference>
<dbReference type="NCBIfam" id="TIGR00612">
    <property type="entry name" value="ispG_gcpE"/>
    <property type="match status" value="1"/>
</dbReference>
<dbReference type="NCBIfam" id="NF001540">
    <property type="entry name" value="PRK00366.1"/>
    <property type="match status" value="1"/>
</dbReference>
<dbReference type="PANTHER" id="PTHR30454">
    <property type="entry name" value="4-HYDROXY-3-METHYLBUT-2-EN-1-YL DIPHOSPHATE SYNTHASE"/>
    <property type="match status" value="1"/>
</dbReference>
<dbReference type="PANTHER" id="PTHR30454:SF0">
    <property type="entry name" value="4-HYDROXY-3-METHYLBUT-2-EN-1-YL DIPHOSPHATE SYNTHASE (FERREDOXIN), CHLOROPLASTIC"/>
    <property type="match status" value="1"/>
</dbReference>
<dbReference type="Pfam" id="PF04551">
    <property type="entry name" value="GcpE"/>
    <property type="match status" value="1"/>
</dbReference>
<dbReference type="PIRSF" id="PIRSF004640">
    <property type="entry name" value="IspG"/>
    <property type="match status" value="1"/>
</dbReference>
<sequence>MHDAVTRPTPPADATAWPRRITQAVKIGGVTVGGGHPVVVQSMTNTDTADIAGSVKQVADLWRAGSEMVRLTVNNAESAAAIPRIVDKLRMMGIDVPLIGDFHYNGHQLLAAEPACAEALAKYRINPGNVGFGKKKDLQFGQLIECAIKYDKPVRIGANWGSLDQSLAAQLMDENAQRETPWDAGRVLREALIRSALDSAERAVELGLPRERIILSAKVSGVQELIAVYRDMASRCDFALHLGLTEAGIGSKGIVASAAALSVLLQQGIGDTIRISLTPEPGQSRTHEVIVAQELLQTTGQRAFTPMVTACPGCGRTTSEFFQELAGVVQNHVRAKMPEWKITNPGAENMTLAVMGCVVNGPGESRHANIGISLPGTGEAPSAPVFIDGEKSVILRGENIAQEFIGLIDQYVERTYARRAG</sequence>
<comment type="function">
    <text evidence="1">Converts 2C-methyl-D-erythritol 2,4-cyclodiphosphate (ME-2,4cPP) into 1-hydroxy-2-methyl-2-(E)-butenyl 4-diphosphate.</text>
</comment>
<comment type="catalytic activity">
    <reaction evidence="1">
        <text>(2E)-4-hydroxy-3-methylbut-2-enyl diphosphate + oxidized [flavodoxin] + H2O + 2 H(+) = 2-C-methyl-D-erythritol 2,4-cyclic diphosphate + reduced [flavodoxin]</text>
        <dbReference type="Rhea" id="RHEA:43604"/>
        <dbReference type="Rhea" id="RHEA-COMP:10622"/>
        <dbReference type="Rhea" id="RHEA-COMP:10623"/>
        <dbReference type="ChEBI" id="CHEBI:15377"/>
        <dbReference type="ChEBI" id="CHEBI:15378"/>
        <dbReference type="ChEBI" id="CHEBI:57618"/>
        <dbReference type="ChEBI" id="CHEBI:58210"/>
        <dbReference type="ChEBI" id="CHEBI:58483"/>
        <dbReference type="ChEBI" id="CHEBI:128753"/>
        <dbReference type="EC" id="1.17.7.3"/>
    </reaction>
</comment>
<comment type="cofactor">
    <cofactor evidence="1">
        <name>[4Fe-4S] cluster</name>
        <dbReference type="ChEBI" id="CHEBI:49883"/>
    </cofactor>
    <text evidence="1">Binds 1 [4Fe-4S] cluster.</text>
</comment>
<comment type="pathway">
    <text evidence="1">Isoprenoid biosynthesis; isopentenyl diphosphate biosynthesis via DXP pathway; isopentenyl diphosphate from 1-deoxy-D-xylulose 5-phosphate: step 5/6.</text>
</comment>
<comment type="similarity">
    <text evidence="1">Belongs to the IspG family.</text>
</comment>
<keyword id="KW-0004">4Fe-4S</keyword>
<keyword id="KW-0408">Iron</keyword>
<keyword id="KW-0411">Iron-sulfur</keyword>
<keyword id="KW-0414">Isoprene biosynthesis</keyword>
<keyword id="KW-0479">Metal-binding</keyword>
<keyword id="KW-0560">Oxidoreductase</keyword>
<keyword id="KW-1185">Reference proteome</keyword>
<proteinExistence type="inferred from homology"/>
<accession>Q5H0N8</accession>
<name>ISPG_XANOR</name>
<feature type="chain" id="PRO_0000190662" description="4-hydroxy-3-methylbut-2-en-1-yl diphosphate synthase (flavodoxin)">
    <location>
        <begin position="1"/>
        <end position="421"/>
    </location>
</feature>
<feature type="binding site" evidence="1">
    <location>
        <position position="311"/>
    </location>
    <ligand>
        <name>[4Fe-4S] cluster</name>
        <dbReference type="ChEBI" id="CHEBI:49883"/>
    </ligand>
</feature>
<feature type="binding site" evidence="1">
    <location>
        <position position="314"/>
    </location>
    <ligand>
        <name>[4Fe-4S] cluster</name>
        <dbReference type="ChEBI" id="CHEBI:49883"/>
    </ligand>
</feature>
<feature type="binding site" evidence="1">
    <location>
        <position position="357"/>
    </location>
    <ligand>
        <name>[4Fe-4S] cluster</name>
        <dbReference type="ChEBI" id="CHEBI:49883"/>
    </ligand>
</feature>
<feature type="binding site" evidence="1">
    <location>
        <position position="364"/>
    </location>
    <ligand>
        <name>[4Fe-4S] cluster</name>
        <dbReference type="ChEBI" id="CHEBI:49883"/>
    </ligand>
</feature>
<organism>
    <name type="scientific">Xanthomonas oryzae pv. oryzae (strain KACC10331 / KXO85)</name>
    <dbReference type="NCBI Taxonomy" id="291331"/>
    <lineage>
        <taxon>Bacteria</taxon>
        <taxon>Pseudomonadati</taxon>
        <taxon>Pseudomonadota</taxon>
        <taxon>Gammaproteobacteria</taxon>
        <taxon>Lysobacterales</taxon>
        <taxon>Lysobacteraceae</taxon>
        <taxon>Xanthomonas</taxon>
    </lineage>
</organism>
<gene>
    <name evidence="1" type="primary">ispG</name>
    <name type="ordered locus">XOO2229</name>
</gene>
<protein>
    <recommendedName>
        <fullName evidence="1">4-hydroxy-3-methylbut-2-en-1-yl diphosphate synthase (flavodoxin)</fullName>
        <ecNumber evidence="1">1.17.7.3</ecNumber>
    </recommendedName>
    <alternativeName>
        <fullName evidence="1">1-hydroxy-2-methyl-2-(E)-butenyl 4-diphosphate synthase</fullName>
    </alternativeName>
</protein>
<reference key="1">
    <citation type="journal article" date="2005" name="Nucleic Acids Res.">
        <title>The genome sequence of Xanthomonas oryzae pathovar oryzae KACC10331, the bacterial blight pathogen of rice.</title>
        <authorList>
            <person name="Lee B.-M."/>
            <person name="Park Y.-J."/>
            <person name="Park D.-S."/>
            <person name="Kang H.-W."/>
            <person name="Kim J.-G."/>
            <person name="Song E.-S."/>
            <person name="Park I.-C."/>
            <person name="Yoon U.-H."/>
            <person name="Hahn J.-H."/>
            <person name="Koo B.-S."/>
            <person name="Lee G.-B."/>
            <person name="Kim H."/>
            <person name="Park H.-S."/>
            <person name="Yoon K.-O."/>
            <person name="Kim J.-H."/>
            <person name="Jung C.-H."/>
            <person name="Koh N.-H."/>
            <person name="Seo J.-S."/>
            <person name="Go S.-J."/>
        </authorList>
    </citation>
    <scope>NUCLEOTIDE SEQUENCE [LARGE SCALE GENOMIC DNA]</scope>
    <source>
        <strain>KACC10331 / KXO85</strain>
    </source>
</reference>